<dbReference type="EMBL" id="CP000767">
    <property type="protein sequence ID" value="EAT99714.2"/>
    <property type="molecule type" value="Genomic_DNA"/>
</dbReference>
<dbReference type="RefSeq" id="WP_011991668.1">
    <property type="nucleotide sequence ID" value="NC_009715.2"/>
</dbReference>
<dbReference type="SMR" id="A7GVZ3"/>
<dbReference type="STRING" id="360105.CCV52592_0329"/>
<dbReference type="GeneID" id="61001371"/>
<dbReference type="KEGG" id="ccv:CCV52592_0329"/>
<dbReference type="HOGENOM" id="CLU_054919_3_2_7"/>
<dbReference type="OrthoDB" id="9806014at2"/>
<dbReference type="Proteomes" id="UP000006380">
    <property type="component" value="Chromosome"/>
</dbReference>
<dbReference type="GO" id="GO:0005829">
    <property type="term" value="C:cytosol"/>
    <property type="evidence" value="ECO:0007669"/>
    <property type="project" value="TreeGrafter"/>
</dbReference>
<dbReference type="GO" id="GO:0016020">
    <property type="term" value="C:membrane"/>
    <property type="evidence" value="ECO:0007669"/>
    <property type="project" value="TreeGrafter"/>
</dbReference>
<dbReference type="GO" id="GO:0043022">
    <property type="term" value="F:ribosome binding"/>
    <property type="evidence" value="ECO:0007669"/>
    <property type="project" value="TreeGrafter"/>
</dbReference>
<dbReference type="GO" id="GO:0003743">
    <property type="term" value="F:translation initiation factor activity"/>
    <property type="evidence" value="ECO:0007669"/>
    <property type="project" value="UniProtKB-UniRule"/>
</dbReference>
<dbReference type="GO" id="GO:0032790">
    <property type="term" value="P:ribosome disassembly"/>
    <property type="evidence" value="ECO:0007669"/>
    <property type="project" value="TreeGrafter"/>
</dbReference>
<dbReference type="FunFam" id="3.10.20.80:FF:000001">
    <property type="entry name" value="Translation initiation factor IF-3"/>
    <property type="match status" value="1"/>
</dbReference>
<dbReference type="Gene3D" id="3.30.110.10">
    <property type="entry name" value="Translation initiation factor 3 (IF-3), C-terminal domain"/>
    <property type="match status" value="1"/>
</dbReference>
<dbReference type="Gene3D" id="3.10.20.80">
    <property type="entry name" value="Translation initiation factor 3 (IF-3), N-terminal domain"/>
    <property type="match status" value="1"/>
</dbReference>
<dbReference type="HAMAP" id="MF_00080">
    <property type="entry name" value="IF_3"/>
    <property type="match status" value="1"/>
</dbReference>
<dbReference type="InterPro" id="IPR036788">
    <property type="entry name" value="T_IF-3_C_sf"/>
</dbReference>
<dbReference type="InterPro" id="IPR036787">
    <property type="entry name" value="T_IF-3_N_sf"/>
</dbReference>
<dbReference type="InterPro" id="IPR019813">
    <property type="entry name" value="Translation_initiation_fac3_CS"/>
</dbReference>
<dbReference type="InterPro" id="IPR001288">
    <property type="entry name" value="Translation_initiation_fac_3"/>
</dbReference>
<dbReference type="InterPro" id="IPR019815">
    <property type="entry name" value="Translation_initiation_fac_3_C"/>
</dbReference>
<dbReference type="InterPro" id="IPR019814">
    <property type="entry name" value="Translation_initiation_fac_3_N"/>
</dbReference>
<dbReference type="NCBIfam" id="TIGR00168">
    <property type="entry name" value="infC"/>
    <property type="match status" value="1"/>
</dbReference>
<dbReference type="PANTHER" id="PTHR10938">
    <property type="entry name" value="TRANSLATION INITIATION FACTOR IF-3"/>
    <property type="match status" value="1"/>
</dbReference>
<dbReference type="PANTHER" id="PTHR10938:SF0">
    <property type="entry name" value="TRANSLATION INITIATION FACTOR IF-3, MITOCHONDRIAL"/>
    <property type="match status" value="1"/>
</dbReference>
<dbReference type="Pfam" id="PF00707">
    <property type="entry name" value="IF3_C"/>
    <property type="match status" value="1"/>
</dbReference>
<dbReference type="Pfam" id="PF05198">
    <property type="entry name" value="IF3_N"/>
    <property type="match status" value="1"/>
</dbReference>
<dbReference type="SUPFAM" id="SSF55200">
    <property type="entry name" value="Translation initiation factor IF3, C-terminal domain"/>
    <property type="match status" value="1"/>
</dbReference>
<dbReference type="SUPFAM" id="SSF54364">
    <property type="entry name" value="Translation initiation factor IF3, N-terminal domain"/>
    <property type="match status" value="1"/>
</dbReference>
<dbReference type="PROSITE" id="PS00938">
    <property type="entry name" value="IF3"/>
    <property type="match status" value="1"/>
</dbReference>
<proteinExistence type="inferred from homology"/>
<name>IF3_CAMC5</name>
<reference key="1">
    <citation type="submission" date="2007-07" db="EMBL/GenBank/DDBJ databases">
        <title>Genome sequence of Campylobacter curvus 525.92 isolated from human feces.</title>
        <authorList>
            <person name="Fouts D.E."/>
            <person name="Mongodin E.F."/>
            <person name="Puiu D."/>
            <person name="Sebastian Y."/>
            <person name="Miller W.G."/>
            <person name="Mandrell R.E."/>
            <person name="Lastovica A.J."/>
            <person name="Nelson K.E."/>
        </authorList>
    </citation>
    <scope>NUCLEOTIDE SEQUENCE [LARGE SCALE GENOMIC DNA]</scope>
    <source>
        <strain>525.92</strain>
    </source>
</reference>
<evidence type="ECO:0000255" key="1">
    <source>
        <dbReference type="HAMAP-Rule" id="MF_00080"/>
    </source>
</evidence>
<sequence>MSKENEVLLNEDIRAREVRCVGDDGTVYGVVSRDEALKIAEKQGLDLVLVAPDAKPPVCKIMDYGKFRYQQEKKQKEAKKKQKVIEIKEIKLSIKIAQNDINYKVKHAVEFLQDGKHVKFRVFLKGREMSTPEAGVAMLEKVWELVKDVADRDKEPLVEGRYVNMLVTPKKG</sequence>
<gene>
    <name evidence="1" type="primary">infC</name>
    <name type="ordered locus">Ccur92_00810</name>
    <name type="ORF">CCV52592_0329</name>
</gene>
<protein>
    <recommendedName>
        <fullName evidence="1">Translation initiation factor IF-3</fullName>
    </recommendedName>
</protein>
<organism>
    <name type="scientific">Campylobacter curvus (strain 525.92)</name>
    <dbReference type="NCBI Taxonomy" id="360105"/>
    <lineage>
        <taxon>Bacteria</taxon>
        <taxon>Pseudomonadati</taxon>
        <taxon>Campylobacterota</taxon>
        <taxon>Epsilonproteobacteria</taxon>
        <taxon>Campylobacterales</taxon>
        <taxon>Campylobacteraceae</taxon>
        <taxon>Campylobacter</taxon>
    </lineage>
</organism>
<comment type="function">
    <text evidence="1">IF-3 binds to the 30S ribosomal subunit and shifts the equilibrium between 70S ribosomes and their 50S and 30S subunits in favor of the free subunits, thus enhancing the availability of 30S subunits on which protein synthesis initiation begins.</text>
</comment>
<comment type="subunit">
    <text evidence="1">Monomer.</text>
</comment>
<comment type="subcellular location">
    <subcellularLocation>
        <location evidence="1">Cytoplasm</location>
    </subcellularLocation>
</comment>
<comment type="similarity">
    <text evidence="1">Belongs to the IF-3 family.</text>
</comment>
<keyword id="KW-0963">Cytoplasm</keyword>
<keyword id="KW-0396">Initiation factor</keyword>
<keyword id="KW-0648">Protein biosynthesis</keyword>
<keyword id="KW-1185">Reference proteome</keyword>
<accession>A7GVZ3</accession>
<feature type="chain" id="PRO_1000004531" description="Translation initiation factor IF-3">
    <location>
        <begin position="1"/>
        <end position="172"/>
    </location>
</feature>